<feature type="chain" id="PRO_0000109227" description="UDP-N-acetylglucosamine--N-acetylmuramyl-(pentapeptide) pyrophosphoryl-undecaprenol N-acetylglucosamine transferase">
    <location>
        <begin position="1"/>
        <end position="360"/>
    </location>
</feature>
<feature type="binding site" evidence="1">
    <location>
        <position position="198"/>
    </location>
    <ligand>
        <name>UDP-N-acetyl-alpha-D-glucosamine</name>
        <dbReference type="ChEBI" id="CHEBI:57705"/>
    </ligand>
</feature>
<feature type="binding site" evidence="1">
    <location>
        <position position="289"/>
    </location>
    <ligand>
        <name>UDP-N-acetyl-alpha-D-glucosamine</name>
        <dbReference type="ChEBI" id="CHEBI:57705"/>
    </ligand>
</feature>
<keyword id="KW-0131">Cell cycle</keyword>
<keyword id="KW-0132">Cell division</keyword>
<keyword id="KW-1003">Cell membrane</keyword>
<keyword id="KW-0133">Cell shape</keyword>
<keyword id="KW-0961">Cell wall biogenesis/degradation</keyword>
<keyword id="KW-0328">Glycosyltransferase</keyword>
<keyword id="KW-0472">Membrane</keyword>
<keyword id="KW-0573">Peptidoglycan synthesis</keyword>
<keyword id="KW-0808">Transferase</keyword>
<sequence length="360" mass="40355">MPKKILFTGGGTVGHVTLNLILIPKFIKDGWEVHYIGDKNGIEHTEIEKSGLDVTFHAIATGKLRRYFSWQNLADVFKVALGLLQSLFIVAKLRPQALFSKGGFVSVPPVVAAKLLGKPVFIHESDRSMGLANKIAYKFATTVYTTFEQEDQLSKVKHLGAVTKVFKDANQIPESTQLEAVNEYFSRDLKTLLFIGGSAGAHVFNQFISDHPELKQRYNIINITGDPHLNELSSHLYRVDYVTDLYQPLMAMADLVVTRGGSNTLFELLAMAKLHLIVPLGKEASRGDQLENATYFEKRGYAKQLQEPDLTLHNFDQAMADLFEHQADYEATMLATKEIQSPDFFYDLLRADISSAIKEK</sequence>
<reference key="1">
    <citation type="journal article" date="2004" name="J. Infect. Dis.">
        <title>Progress toward characterization of the group A Streptococcus metagenome: complete genome sequence of a macrolide-resistant serotype M6 strain.</title>
        <authorList>
            <person name="Banks D.J."/>
            <person name="Porcella S.F."/>
            <person name="Barbian K.D."/>
            <person name="Beres S.B."/>
            <person name="Philips L.E."/>
            <person name="Voyich J.M."/>
            <person name="DeLeo F.R."/>
            <person name="Martin J.M."/>
            <person name="Somerville G.A."/>
            <person name="Musser J.M."/>
        </authorList>
    </citation>
    <scope>NUCLEOTIDE SEQUENCE [LARGE SCALE GENOMIC DNA]</scope>
    <source>
        <strain>ATCC BAA-946 / MGAS10394</strain>
    </source>
</reference>
<gene>
    <name evidence="1" type="primary">murG</name>
    <name type="ordered locus">M6_Spy1273</name>
</gene>
<name>MURG_STRP6</name>
<evidence type="ECO:0000255" key="1">
    <source>
        <dbReference type="HAMAP-Rule" id="MF_00033"/>
    </source>
</evidence>
<evidence type="ECO:0000305" key="2"/>
<protein>
    <recommendedName>
        <fullName evidence="1">UDP-N-acetylglucosamine--N-acetylmuramyl-(pentapeptide) pyrophosphoryl-undecaprenol N-acetylglucosamine transferase</fullName>
        <ecNumber evidence="1">2.4.1.227</ecNumber>
    </recommendedName>
    <alternativeName>
        <fullName evidence="1">Undecaprenyl-PP-MurNAc-pentapeptide-UDPGlcNAc GlcNAc transferase</fullName>
    </alternativeName>
</protein>
<proteinExistence type="inferred from homology"/>
<comment type="function">
    <text evidence="1">Cell wall formation. Catalyzes the transfer of a GlcNAc subunit on undecaprenyl-pyrophosphoryl-MurNAc-pentapeptide (lipid intermediate I) to form undecaprenyl-pyrophosphoryl-MurNAc-(pentapeptide)GlcNAc (lipid intermediate II).</text>
</comment>
<comment type="catalytic activity">
    <reaction evidence="1">
        <text>Mur2Ac(oyl-L-Ala-gamma-D-Glu-L-Lys-D-Ala-D-Ala)-di-trans,octa-cis-undecaprenyl diphosphate + UDP-N-acetyl-alpha-D-glucosamine = beta-D-GlcNAc-(1-&gt;4)-Mur2Ac(oyl-L-Ala-gamma-D-Glu-L-Lys-D-Ala-D-Ala)-di-trans,octa-cis-undecaprenyl diphosphate + UDP + H(+)</text>
        <dbReference type="Rhea" id="RHEA:23192"/>
        <dbReference type="ChEBI" id="CHEBI:15378"/>
        <dbReference type="ChEBI" id="CHEBI:57705"/>
        <dbReference type="ChEBI" id="CHEBI:58223"/>
        <dbReference type="ChEBI" id="CHEBI:60032"/>
        <dbReference type="ChEBI" id="CHEBI:60033"/>
        <dbReference type="EC" id="2.4.1.227"/>
    </reaction>
</comment>
<comment type="pathway">
    <text evidence="1">Cell wall biogenesis; peptidoglycan biosynthesis.</text>
</comment>
<comment type="subcellular location">
    <subcellularLocation>
        <location evidence="1">Cell membrane</location>
        <topology evidence="1">Peripheral membrane protein</topology>
        <orientation evidence="1">Cytoplasmic side</orientation>
    </subcellularLocation>
</comment>
<comment type="similarity">
    <text evidence="1">Belongs to the glycosyltransferase 28 family. MurG subfamily.</text>
</comment>
<comment type="sequence caution" evidence="2">
    <conflict type="erroneous initiation">
        <sequence resource="EMBL-CDS" id="AAT87408"/>
    </conflict>
</comment>
<organism>
    <name type="scientific">Streptococcus pyogenes serotype M6 (strain ATCC BAA-946 / MGAS10394)</name>
    <dbReference type="NCBI Taxonomy" id="286636"/>
    <lineage>
        <taxon>Bacteria</taxon>
        <taxon>Bacillati</taxon>
        <taxon>Bacillota</taxon>
        <taxon>Bacilli</taxon>
        <taxon>Lactobacillales</taxon>
        <taxon>Streptococcaceae</taxon>
        <taxon>Streptococcus</taxon>
    </lineage>
</organism>
<dbReference type="EC" id="2.4.1.227" evidence="1"/>
<dbReference type="EMBL" id="CP000003">
    <property type="protein sequence ID" value="AAT87408.1"/>
    <property type="status" value="ALT_INIT"/>
    <property type="molecule type" value="Genomic_DNA"/>
</dbReference>
<dbReference type="RefSeq" id="WP_021340363.1">
    <property type="nucleotide sequence ID" value="NC_006086.1"/>
</dbReference>
<dbReference type="SMR" id="Q5XB05"/>
<dbReference type="CAZy" id="GT28">
    <property type="family name" value="Glycosyltransferase Family 28"/>
</dbReference>
<dbReference type="KEGG" id="spa:M6_Spy1273"/>
<dbReference type="HOGENOM" id="CLU_037404_0_0_9"/>
<dbReference type="UniPathway" id="UPA00219"/>
<dbReference type="Proteomes" id="UP000001167">
    <property type="component" value="Chromosome"/>
</dbReference>
<dbReference type="GO" id="GO:0005886">
    <property type="term" value="C:plasma membrane"/>
    <property type="evidence" value="ECO:0007669"/>
    <property type="project" value="UniProtKB-SubCell"/>
</dbReference>
<dbReference type="GO" id="GO:0050511">
    <property type="term" value="F:undecaprenyldiphospho-muramoylpentapeptide beta-N-acetylglucosaminyltransferase activity"/>
    <property type="evidence" value="ECO:0007669"/>
    <property type="project" value="UniProtKB-UniRule"/>
</dbReference>
<dbReference type="GO" id="GO:0005975">
    <property type="term" value="P:carbohydrate metabolic process"/>
    <property type="evidence" value="ECO:0007669"/>
    <property type="project" value="InterPro"/>
</dbReference>
<dbReference type="GO" id="GO:0051301">
    <property type="term" value="P:cell division"/>
    <property type="evidence" value="ECO:0007669"/>
    <property type="project" value="UniProtKB-KW"/>
</dbReference>
<dbReference type="GO" id="GO:0071555">
    <property type="term" value="P:cell wall organization"/>
    <property type="evidence" value="ECO:0007669"/>
    <property type="project" value="UniProtKB-KW"/>
</dbReference>
<dbReference type="GO" id="GO:0030259">
    <property type="term" value="P:lipid glycosylation"/>
    <property type="evidence" value="ECO:0007669"/>
    <property type="project" value="UniProtKB-UniRule"/>
</dbReference>
<dbReference type="GO" id="GO:0009252">
    <property type="term" value="P:peptidoglycan biosynthetic process"/>
    <property type="evidence" value="ECO:0007669"/>
    <property type="project" value="UniProtKB-UniRule"/>
</dbReference>
<dbReference type="GO" id="GO:0008360">
    <property type="term" value="P:regulation of cell shape"/>
    <property type="evidence" value="ECO:0007669"/>
    <property type="project" value="UniProtKB-KW"/>
</dbReference>
<dbReference type="CDD" id="cd03785">
    <property type="entry name" value="GT28_MurG"/>
    <property type="match status" value="1"/>
</dbReference>
<dbReference type="Gene3D" id="3.40.50.2000">
    <property type="entry name" value="Glycogen Phosphorylase B"/>
    <property type="match status" value="2"/>
</dbReference>
<dbReference type="HAMAP" id="MF_00033">
    <property type="entry name" value="MurG"/>
    <property type="match status" value="1"/>
</dbReference>
<dbReference type="InterPro" id="IPR006009">
    <property type="entry name" value="GlcNAc_MurG"/>
</dbReference>
<dbReference type="InterPro" id="IPR007235">
    <property type="entry name" value="Glyco_trans_28_C"/>
</dbReference>
<dbReference type="InterPro" id="IPR004276">
    <property type="entry name" value="GlycoTrans_28_N"/>
</dbReference>
<dbReference type="PANTHER" id="PTHR21015:SF27">
    <property type="entry name" value="UDP-N-ACETYLGLUCOSAMINE--N-ACETYLMURAMYL-(PENTAPEPTIDE) PYROPHOSPHORYL-UNDECAPRENOL N-ACETYLGLUCOSAMINE TRANSFERASE"/>
    <property type="match status" value="1"/>
</dbReference>
<dbReference type="PANTHER" id="PTHR21015">
    <property type="entry name" value="UDP-N-ACETYLGLUCOSAMINE--N-ACETYLMURAMYL-(PENTAPEPTIDE) PYROPHOSPHORYL-UNDECAPRENOL N-ACETYLGLUCOSAMINE TRANSFERASE 1"/>
    <property type="match status" value="1"/>
</dbReference>
<dbReference type="Pfam" id="PF04101">
    <property type="entry name" value="Glyco_tran_28_C"/>
    <property type="match status" value="1"/>
</dbReference>
<dbReference type="Pfam" id="PF03033">
    <property type="entry name" value="Glyco_transf_28"/>
    <property type="match status" value="1"/>
</dbReference>
<dbReference type="SUPFAM" id="SSF53756">
    <property type="entry name" value="UDP-Glycosyltransferase/glycogen phosphorylase"/>
    <property type="match status" value="1"/>
</dbReference>
<accession>Q5XB05</accession>